<reference key="1">
    <citation type="journal article" date="2001" name="Proc. Natl. Acad. Sci. U.S.A.">
        <title>The complete sequence of the 1,683-kb pSymB megaplasmid from the N2-fixing endosymbiont Sinorhizobium meliloti.</title>
        <authorList>
            <person name="Finan T.M."/>
            <person name="Weidner S."/>
            <person name="Wong K."/>
            <person name="Buhrmester J."/>
            <person name="Chain P."/>
            <person name="Vorhoelter F.J."/>
            <person name="Hernandez-Lucas I."/>
            <person name="Becker A."/>
            <person name="Cowie A."/>
            <person name="Gouzy J."/>
            <person name="Golding B."/>
            <person name="Puehler A."/>
        </authorList>
    </citation>
    <scope>NUCLEOTIDE SEQUENCE [LARGE SCALE GENOMIC DNA]</scope>
    <source>
        <strain>1021</strain>
    </source>
</reference>
<reference key="2">
    <citation type="journal article" date="2001" name="Science">
        <title>The composite genome of the legume symbiont Sinorhizobium meliloti.</title>
        <authorList>
            <person name="Galibert F."/>
            <person name="Finan T.M."/>
            <person name="Long S.R."/>
            <person name="Puehler A."/>
            <person name="Abola P."/>
            <person name="Ampe F."/>
            <person name="Barloy-Hubler F."/>
            <person name="Barnett M.J."/>
            <person name="Becker A."/>
            <person name="Boistard P."/>
            <person name="Bothe G."/>
            <person name="Boutry M."/>
            <person name="Bowser L."/>
            <person name="Buhrmester J."/>
            <person name="Cadieu E."/>
            <person name="Capela D."/>
            <person name="Chain P."/>
            <person name="Cowie A."/>
            <person name="Davis R.W."/>
            <person name="Dreano S."/>
            <person name="Federspiel N.A."/>
            <person name="Fisher R.F."/>
            <person name="Gloux S."/>
            <person name="Godrie T."/>
            <person name="Goffeau A."/>
            <person name="Golding B."/>
            <person name="Gouzy J."/>
            <person name="Gurjal M."/>
            <person name="Hernandez-Lucas I."/>
            <person name="Hong A."/>
            <person name="Huizar L."/>
            <person name="Hyman R.W."/>
            <person name="Jones T."/>
            <person name="Kahn D."/>
            <person name="Kahn M.L."/>
            <person name="Kalman S."/>
            <person name="Keating D.H."/>
            <person name="Kiss E."/>
            <person name="Komp C."/>
            <person name="Lelaure V."/>
            <person name="Masuy D."/>
            <person name="Palm C."/>
            <person name="Peck M.C."/>
            <person name="Pohl T.M."/>
            <person name="Portetelle D."/>
            <person name="Purnelle B."/>
            <person name="Ramsperger U."/>
            <person name="Surzycki R."/>
            <person name="Thebault P."/>
            <person name="Vandenbol M."/>
            <person name="Vorhoelter F.J."/>
            <person name="Weidner S."/>
            <person name="Wells D.H."/>
            <person name="Wong K."/>
            <person name="Yeh K.-C."/>
            <person name="Batut J."/>
        </authorList>
    </citation>
    <scope>NUCLEOTIDE SEQUENCE [LARGE SCALE GENOMIC DNA]</scope>
    <source>
        <strain>1021</strain>
    </source>
</reference>
<accession>Q92UV5</accession>
<gene>
    <name evidence="1" type="primary">fbpC2</name>
    <name type="ordered locus">RB0982</name>
    <name type="ORF">SMb21541</name>
</gene>
<name>FBPC2_RHIME</name>
<organism>
    <name type="scientific">Rhizobium meliloti (strain 1021)</name>
    <name type="common">Ensifer meliloti</name>
    <name type="synonym">Sinorhizobium meliloti</name>
    <dbReference type="NCBI Taxonomy" id="266834"/>
    <lineage>
        <taxon>Bacteria</taxon>
        <taxon>Pseudomonadati</taxon>
        <taxon>Pseudomonadota</taxon>
        <taxon>Alphaproteobacteria</taxon>
        <taxon>Hyphomicrobiales</taxon>
        <taxon>Rhizobiaceae</taxon>
        <taxon>Sinorhizobium/Ensifer group</taxon>
        <taxon>Sinorhizobium</taxon>
    </lineage>
</organism>
<sequence>MHIAQELADETCNSPRGAGHARLRYPSDRRTAIPRNRRPLEGLWRFRRVRDIDLQVKEGEFICFLGPSGCGKTTLLRAIAGLDIQSRGTICQGGQDISRLPPAQRDYGIVFQSYALFPNLTIEKNIAFGLENIGRPRREIASRVSELLELVGLSSQGRKYPAQLSGGQQQRVALARAMAISPGLLLLDEPLSALDAKVRVHLRHEIKELQRKLGVTTIMVTHDQEEALAMADRIVVMNQGGIEQVGTPTEIYRHPKTLFVADFIGETNQFPATVGKGAQVEIGHTRFACAEHRLPSGASVVAAVRPADIIPHGAAAHRATGLDAVGNADNLIDAHVEDMEFLGMFWRTRLSAPRLKEKALVADFSTNAVRRLSIEIGSAIQVEIPQERLLLFAKA</sequence>
<comment type="function">
    <text evidence="1">Part of the ABC transporter complex FbpABC involved in Fe(3+) ions import. Responsible for energy coupling to the transport system.</text>
</comment>
<comment type="catalytic activity">
    <reaction evidence="1">
        <text>Fe(3+)(out) + ATP + H2O = Fe(3+)(in) + ADP + phosphate + H(+)</text>
        <dbReference type="Rhea" id="RHEA:12332"/>
        <dbReference type="ChEBI" id="CHEBI:15377"/>
        <dbReference type="ChEBI" id="CHEBI:15378"/>
        <dbReference type="ChEBI" id="CHEBI:29034"/>
        <dbReference type="ChEBI" id="CHEBI:30616"/>
        <dbReference type="ChEBI" id="CHEBI:43474"/>
        <dbReference type="ChEBI" id="CHEBI:456216"/>
        <dbReference type="EC" id="7.2.2.7"/>
    </reaction>
</comment>
<comment type="subunit">
    <text evidence="1">The complex is composed of two ATP-binding proteins (FbpC), two transmembrane proteins (FbpB) and a solute-binding protein (FbpA).</text>
</comment>
<comment type="subcellular location">
    <subcellularLocation>
        <location evidence="1">Cell inner membrane</location>
        <topology evidence="1">Peripheral membrane protein</topology>
    </subcellularLocation>
</comment>
<comment type="similarity">
    <text evidence="1">Belongs to the ABC transporter superfamily. Fe(3+) ion importer (TC 3.A.1.10) family.</text>
</comment>
<evidence type="ECO:0000255" key="1">
    <source>
        <dbReference type="HAMAP-Rule" id="MF_01706"/>
    </source>
</evidence>
<evidence type="ECO:0000256" key="2">
    <source>
        <dbReference type="SAM" id="MobiDB-lite"/>
    </source>
</evidence>
<feature type="chain" id="PRO_0000092363" description="Fe(3+) ions import ATP-binding protein FbpC 2">
    <location>
        <begin position="1"/>
        <end position="395"/>
    </location>
</feature>
<feature type="domain" description="ABC transporter" evidence="1">
    <location>
        <begin position="23"/>
        <end position="264"/>
    </location>
</feature>
<feature type="region of interest" description="Disordered" evidence="2">
    <location>
        <begin position="1"/>
        <end position="21"/>
    </location>
</feature>
<feature type="binding site" evidence="1">
    <location>
        <begin position="66"/>
        <end position="73"/>
    </location>
    <ligand>
        <name>ATP</name>
        <dbReference type="ChEBI" id="CHEBI:30616"/>
    </ligand>
</feature>
<geneLocation type="plasmid">
    <name>pSymB</name>
    <name>megaplasmid 2</name>
</geneLocation>
<protein>
    <recommendedName>
        <fullName evidence="1">Fe(3+) ions import ATP-binding protein FbpC 2</fullName>
        <ecNumber evidence="1">7.2.2.7</ecNumber>
    </recommendedName>
</protein>
<keyword id="KW-0067">ATP-binding</keyword>
<keyword id="KW-0997">Cell inner membrane</keyword>
<keyword id="KW-1003">Cell membrane</keyword>
<keyword id="KW-0406">Ion transport</keyword>
<keyword id="KW-0408">Iron</keyword>
<keyword id="KW-0410">Iron transport</keyword>
<keyword id="KW-0472">Membrane</keyword>
<keyword id="KW-0547">Nucleotide-binding</keyword>
<keyword id="KW-0614">Plasmid</keyword>
<keyword id="KW-1185">Reference proteome</keyword>
<keyword id="KW-1278">Translocase</keyword>
<keyword id="KW-0813">Transport</keyword>
<dbReference type="EC" id="7.2.2.7" evidence="1"/>
<dbReference type="EMBL" id="AL591985">
    <property type="protein sequence ID" value="CAC49382.1"/>
    <property type="molecule type" value="Genomic_DNA"/>
</dbReference>
<dbReference type="PIR" id="F95964">
    <property type="entry name" value="F95964"/>
</dbReference>
<dbReference type="RefSeq" id="NP_437522.1">
    <property type="nucleotide sequence ID" value="NC_003078.1"/>
</dbReference>
<dbReference type="SMR" id="Q92UV5"/>
<dbReference type="EnsemblBacteria" id="CAC49382">
    <property type="protein sequence ID" value="CAC49382"/>
    <property type="gene ID" value="SM_b21541"/>
</dbReference>
<dbReference type="KEGG" id="sme:SM_b21541"/>
<dbReference type="PATRIC" id="fig|266834.11.peg.5909"/>
<dbReference type="eggNOG" id="COG3842">
    <property type="taxonomic scope" value="Bacteria"/>
</dbReference>
<dbReference type="HOGENOM" id="CLU_000604_1_1_5"/>
<dbReference type="OrthoDB" id="9802264at2"/>
<dbReference type="Proteomes" id="UP000001976">
    <property type="component" value="Plasmid pSymB"/>
</dbReference>
<dbReference type="GO" id="GO:0005886">
    <property type="term" value="C:plasma membrane"/>
    <property type="evidence" value="ECO:0007669"/>
    <property type="project" value="UniProtKB-SubCell"/>
</dbReference>
<dbReference type="GO" id="GO:0015408">
    <property type="term" value="F:ABC-type ferric iron transporter activity"/>
    <property type="evidence" value="ECO:0007669"/>
    <property type="project" value="UniProtKB-EC"/>
</dbReference>
<dbReference type="GO" id="GO:0005524">
    <property type="term" value="F:ATP binding"/>
    <property type="evidence" value="ECO:0007669"/>
    <property type="project" value="UniProtKB-KW"/>
</dbReference>
<dbReference type="GO" id="GO:0016887">
    <property type="term" value="F:ATP hydrolysis activity"/>
    <property type="evidence" value="ECO:0007669"/>
    <property type="project" value="InterPro"/>
</dbReference>
<dbReference type="FunFam" id="3.40.50.300:FF:000425">
    <property type="entry name" value="Probable ABC transporter, ATP-binding subunit"/>
    <property type="match status" value="1"/>
</dbReference>
<dbReference type="Gene3D" id="2.40.50.100">
    <property type="match status" value="1"/>
</dbReference>
<dbReference type="Gene3D" id="3.40.50.300">
    <property type="entry name" value="P-loop containing nucleotide triphosphate hydrolases"/>
    <property type="match status" value="1"/>
</dbReference>
<dbReference type="InterPro" id="IPR003593">
    <property type="entry name" value="AAA+_ATPase"/>
</dbReference>
<dbReference type="InterPro" id="IPR050093">
    <property type="entry name" value="ABC_SmlMolc_Importer"/>
</dbReference>
<dbReference type="InterPro" id="IPR003439">
    <property type="entry name" value="ABC_transporter-like_ATP-bd"/>
</dbReference>
<dbReference type="InterPro" id="IPR017871">
    <property type="entry name" value="ABC_transporter-like_CS"/>
</dbReference>
<dbReference type="InterPro" id="IPR017666">
    <property type="entry name" value="AminoethylPonate_ABC_PhnT2"/>
</dbReference>
<dbReference type="InterPro" id="IPR008995">
    <property type="entry name" value="Mo/tungstate-bd_C_term_dom"/>
</dbReference>
<dbReference type="InterPro" id="IPR027417">
    <property type="entry name" value="P-loop_NTPase"/>
</dbReference>
<dbReference type="NCBIfam" id="TIGR03265">
    <property type="entry name" value="PhnT2"/>
    <property type="match status" value="1"/>
</dbReference>
<dbReference type="PANTHER" id="PTHR42781:SF5">
    <property type="entry name" value="PUTRESCINE TRANSPORT ATP-BINDING PROTEIN POTG"/>
    <property type="match status" value="1"/>
</dbReference>
<dbReference type="PANTHER" id="PTHR42781">
    <property type="entry name" value="SPERMIDINE/PUTRESCINE IMPORT ATP-BINDING PROTEIN POTA"/>
    <property type="match status" value="1"/>
</dbReference>
<dbReference type="Pfam" id="PF00005">
    <property type="entry name" value="ABC_tran"/>
    <property type="match status" value="1"/>
</dbReference>
<dbReference type="SMART" id="SM00382">
    <property type="entry name" value="AAA"/>
    <property type="match status" value="1"/>
</dbReference>
<dbReference type="SUPFAM" id="SSF50331">
    <property type="entry name" value="MOP-like"/>
    <property type="match status" value="1"/>
</dbReference>
<dbReference type="SUPFAM" id="SSF52540">
    <property type="entry name" value="P-loop containing nucleoside triphosphate hydrolases"/>
    <property type="match status" value="1"/>
</dbReference>
<dbReference type="PROSITE" id="PS00211">
    <property type="entry name" value="ABC_TRANSPORTER_1"/>
    <property type="match status" value="1"/>
</dbReference>
<dbReference type="PROSITE" id="PS50893">
    <property type="entry name" value="ABC_TRANSPORTER_2"/>
    <property type="match status" value="1"/>
</dbReference>
<dbReference type="PROSITE" id="PS51242">
    <property type="entry name" value="FBPC"/>
    <property type="match status" value="1"/>
</dbReference>
<proteinExistence type="inferred from homology"/>